<dbReference type="EMBL" id="AF040100">
    <property type="protein sequence ID" value="AAD08785.1"/>
    <property type="molecule type" value="Genomic_DNA"/>
</dbReference>
<dbReference type="SMR" id="Q9ZI50"/>
<dbReference type="GO" id="GO:0022625">
    <property type="term" value="C:cytosolic large ribosomal subunit"/>
    <property type="evidence" value="ECO:0007669"/>
    <property type="project" value="TreeGrafter"/>
</dbReference>
<dbReference type="GO" id="GO:0019843">
    <property type="term" value="F:rRNA binding"/>
    <property type="evidence" value="ECO:0007669"/>
    <property type="project" value="UniProtKB-UniRule"/>
</dbReference>
<dbReference type="GO" id="GO:0003735">
    <property type="term" value="F:structural constituent of ribosome"/>
    <property type="evidence" value="ECO:0007669"/>
    <property type="project" value="InterPro"/>
</dbReference>
<dbReference type="GO" id="GO:0006412">
    <property type="term" value="P:translation"/>
    <property type="evidence" value="ECO:0007669"/>
    <property type="project" value="UniProtKB-UniRule"/>
</dbReference>
<dbReference type="FunFam" id="2.40.30.10:FF:000004">
    <property type="entry name" value="50S ribosomal protein L3"/>
    <property type="match status" value="1"/>
</dbReference>
<dbReference type="FunFam" id="3.30.160.810:FF:000001">
    <property type="entry name" value="50S ribosomal protein L3"/>
    <property type="match status" value="1"/>
</dbReference>
<dbReference type="Gene3D" id="3.30.160.810">
    <property type="match status" value="1"/>
</dbReference>
<dbReference type="Gene3D" id="2.40.30.10">
    <property type="entry name" value="Translation factors"/>
    <property type="match status" value="1"/>
</dbReference>
<dbReference type="HAMAP" id="MF_01325_B">
    <property type="entry name" value="Ribosomal_uL3_B"/>
    <property type="match status" value="1"/>
</dbReference>
<dbReference type="InterPro" id="IPR000597">
    <property type="entry name" value="Ribosomal_uL3"/>
</dbReference>
<dbReference type="InterPro" id="IPR019927">
    <property type="entry name" value="Ribosomal_uL3_bac/org-type"/>
</dbReference>
<dbReference type="InterPro" id="IPR019926">
    <property type="entry name" value="Ribosomal_uL3_CS"/>
</dbReference>
<dbReference type="InterPro" id="IPR009000">
    <property type="entry name" value="Transl_B-barrel_sf"/>
</dbReference>
<dbReference type="NCBIfam" id="TIGR03625">
    <property type="entry name" value="L3_bact"/>
    <property type="match status" value="1"/>
</dbReference>
<dbReference type="PANTHER" id="PTHR11229">
    <property type="entry name" value="50S RIBOSOMAL PROTEIN L3"/>
    <property type="match status" value="1"/>
</dbReference>
<dbReference type="PANTHER" id="PTHR11229:SF16">
    <property type="entry name" value="LARGE RIBOSOMAL SUBUNIT PROTEIN UL3C"/>
    <property type="match status" value="1"/>
</dbReference>
<dbReference type="Pfam" id="PF00297">
    <property type="entry name" value="Ribosomal_L3"/>
    <property type="match status" value="1"/>
</dbReference>
<dbReference type="SUPFAM" id="SSF50447">
    <property type="entry name" value="Translation proteins"/>
    <property type="match status" value="1"/>
</dbReference>
<dbReference type="PROSITE" id="PS00474">
    <property type="entry name" value="RIBOSOMAL_L3"/>
    <property type="match status" value="1"/>
</dbReference>
<accession>Q9ZI50</accession>
<evidence type="ECO:0000255" key="1">
    <source>
        <dbReference type="HAMAP-Rule" id="MF_01325"/>
    </source>
</evidence>
<evidence type="ECO:0000305" key="2"/>
<keyword id="KW-0687">Ribonucleoprotein</keyword>
<keyword id="KW-0689">Ribosomal protein</keyword>
<keyword id="KW-0694">RNA-binding</keyword>
<keyword id="KW-0699">rRNA-binding</keyword>
<protein>
    <recommendedName>
        <fullName evidence="1">Large ribosomal subunit protein uL3</fullName>
    </recommendedName>
    <alternativeName>
        <fullName evidence="2">50S ribosomal protein L3</fullName>
    </alternativeName>
</protein>
<sequence>MPLGLIGEKVGMTRVLLKDGTAIPVTVIKFPVNYVVQVKSVNTKDGYNALQVGAYEAKEKHLTKPLIGHFKKHGVPLLRRLWEFRVDNPEEFKSGQELRVQDVFKPGDLVDVWGISKGRGFAGVMKRWDFAGFPRSHGHRYHRAVGAIGQRTDPGRVWKGKKMPGHYGAKPVRVQGLFVVASLPEENAILVKGSALPGHNKGIVVLLPAVERIAYRKSQKLKQKRLQFIVENLVKEESTEVAES</sequence>
<name>RL3_AQUPY</name>
<organism>
    <name type="scientific">Aquifex pyrophilus</name>
    <dbReference type="NCBI Taxonomy" id="2714"/>
    <lineage>
        <taxon>Bacteria</taxon>
        <taxon>Pseudomonadati</taxon>
        <taxon>Aquificota</taxon>
        <taxon>Aquificia</taxon>
        <taxon>Aquificales</taxon>
        <taxon>Aquificaceae</taxon>
        <taxon>Aquifex</taxon>
    </lineage>
</organism>
<reference key="1">
    <citation type="journal article" date="2000" name="J. Mol. Evol.">
        <title>Phylogenetic depth of the bacterial genera Aquifex and Thermotoga inferred from analysis of ribosomal protein, elongation factor, and RNA polymerase subunit sequences.</title>
        <authorList>
            <person name="Bocchetta M."/>
            <person name="Gribaldo S."/>
            <person name="Sanangelantoni A.M."/>
            <person name="Cammarano P."/>
        </authorList>
    </citation>
    <scope>NUCLEOTIDE SEQUENCE [GENOMIC DNA]</scope>
    <source>
        <strain>DSM 6858 / JCM 9492 / Kol5A</strain>
    </source>
</reference>
<comment type="function">
    <text evidence="1">One of the primary rRNA binding proteins, it binds directly near the 3'-end of the 23S rRNA, where it nucleates assembly of the 50S subunit.</text>
</comment>
<comment type="subunit">
    <text evidence="1">Part of the 50S ribosomal subunit. Forms a cluster with proteins L14 and L19.</text>
</comment>
<comment type="similarity">
    <text evidence="1">Belongs to the universal ribosomal protein uL3 family.</text>
</comment>
<feature type="chain" id="PRO_0000077061" description="Large ribosomal subunit protein uL3">
    <location>
        <begin position="1"/>
        <end position="244"/>
    </location>
</feature>
<gene>
    <name evidence="1" type="primary">rplC</name>
    <name evidence="1" type="synonym">rpl3</name>
</gene>
<proteinExistence type="inferred from homology"/>